<name>CSRA_CLOBL</name>
<proteinExistence type="inferred from homology"/>
<reference key="1">
    <citation type="submission" date="2007-06" db="EMBL/GenBank/DDBJ databases">
        <authorList>
            <person name="Brinkac L.M."/>
            <person name="Daugherty S."/>
            <person name="Dodson R.J."/>
            <person name="Madupu R."/>
            <person name="Brown J.L."/>
            <person name="Bruce D."/>
            <person name="Detter C."/>
            <person name="Munk C."/>
            <person name="Smith L.A."/>
            <person name="Smith T.J."/>
            <person name="White O."/>
            <person name="Brettin T.S."/>
        </authorList>
    </citation>
    <scope>NUCLEOTIDE SEQUENCE [LARGE SCALE GENOMIC DNA]</scope>
    <source>
        <strain>Langeland / NCTC 10281 / Type F</strain>
    </source>
</reference>
<accession>A7GGV5</accession>
<gene>
    <name evidence="1" type="primary">csrA</name>
    <name type="ordered locus">CLI_2787</name>
</gene>
<sequence>MLVITRKKGESLLIGDDIEITVVKLDDGSVKLAIDAPKKLTILRKELYNEVQEENKKATNFNPSILKNIKSK</sequence>
<keyword id="KW-1005">Bacterial flagellum biogenesis</keyword>
<keyword id="KW-0963">Cytoplasm</keyword>
<keyword id="KW-0678">Repressor</keyword>
<keyword id="KW-0694">RNA-binding</keyword>
<keyword id="KW-0810">Translation regulation</keyword>
<comment type="function">
    <text evidence="1">A translational regulator that binds mRNA to regulate translation initiation and/or mRNA stability. Usually binds in the 5'-UTR at or near the Shine-Dalgarno sequence preventing ribosome-binding, thus repressing translation. Its main target seems to be the major flagellin gene, while its function is anatagonized by FliW.</text>
</comment>
<comment type="subunit">
    <text evidence="1">Homodimer; the beta-strands of each monomer intercalate to form a hydrophobic core, while the alpha-helices form wings that extend away from the core.</text>
</comment>
<comment type="subcellular location">
    <subcellularLocation>
        <location evidence="1">Cytoplasm</location>
    </subcellularLocation>
</comment>
<comment type="similarity">
    <text evidence="1">Belongs to the CsrA/RsmA family.</text>
</comment>
<dbReference type="EMBL" id="CP000728">
    <property type="protein sequence ID" value="ABS41012.1"/>
    <property type="molecule type" value="Genomic_DNA"/>
</dbReference>
<dbReference type="RefSeq" id="WP_003359193.1">
    <property type="nucleotide sequence ID" value="NC_009699.1"/>
</dbReference>
<dbReference type="SMR" id="A7GGV5"/>
<dbReference type="KEGG" id="cbf:CLI_2787"/>
<dbReference type="HOGENOM" id="CLU_164837_0_1_9"/>
<dbReference type="Proteomes" id="UP000002410">
    <property type="component" value="Chromosome"/>
</dbReference>
<dbReference type="GO" id="GO:0005829">
    <property type="term" value="C:cytosol"/>
    <property type="evidence" value="ECO:0007669"/>
    <property type="project" value="TreeGrafter"/>
</dbReference>
<dbReference type="GO" id="GO:0048027">
    <property type="term" value="F:mRNA 5'-UTR binding"/>
    <property type="evidence" value="ECO:0007669"/>
    <property type="project" value="UniProtKB-UniRule"/>
</dbReference>
<dbReference type="GO" id="GO:0044781">
    <property type="term" value="P:bacterial-type flagellum organization"/>
    <property type="evidence" value="ECO:0007669"/>
    <property type="project" value="UniProtKB-KW"/>
</dbReference>
<dbReference type="GO" id="GO:0006402">
    <property type="term" value="P:mRNA catabolic process"/>
    <property type="evidence" value="ECO:0007669"/>
    <property type="project" value="InterPro"/>
</dbReference>
<dbReference type="GO" id="GO:0045947">
    <property type="term" value="P:negative regulation of translational initiation"/>
    <property type="evidence" value="ECO:0007669"/>
    <property type="project" value="UniProtKB-UniRule"/>
</dbReference>
<dbReference type="GO" id="GO:1902208">
    <property type="term" value="P:regulation of bacterial-type flagellum assembly"/>
    <property type="evidence" value="ECO:0007669"/>
    <property type="project" value="UniProtKB-UniRule"/>
</dbReference>
<dbReference type="GO" id="GO:0006109">
    <property type="term" value="P:regulation of carbohydrate metabolic process"/>
    <property type="evidence" value="ECO:0007669"/>
    <property type="project" value="InterPro"/>
</dbReference>
<dbReference type="FunFam" id="2.60.40.4380:FF:000002">
    <property type="entry name" value="Translational regulator CsrA"/>
    <property type="match status" value="1"/>
</dbReference>
<dbReference type="Gene3D" id="2.60.40.4380">
    <property type="entry name" value="Translational regulator CsrA"/>
    <property type="match status" value="1"/>
</dbReference>
<dbReference type="HAMAP" id="MF_00167">
    <property type="entry name" value="CsrA"/>
    <property type="match status" value="1"/>
</dbReference>
<dbReference type="InterPro" id="IPR003751">
    <property type="entry name" value="CsrA"/>
</dbReference>
<dbReference type="InterPro" id="IPR036107">
    <property type="entry name" value="CsrA_sf"/>
</dbReference>
<dbReference type="NCBIfam" id="TIGR00202">
    <property type="entry name" value="csrA"/>
    <property type="match status" value="1"/>
</dbReference>
<dbReference type="NCBIfam" id="NF002469">
    <property type="entry name" value="PRK01712.1"/>
    <property type="match status" value="1"/>
</dbReference>
<dbReference type="PANTHER" id="PTHR34984">
    <property type="entry name" value="CARBON STORAGE REGULATOR"/>
    <property type="match status" value="1"/>
</dbReference>
<dbReference type="PANTHER" id="PTHR34984:SF1">
    <property type="entry name" value="CARBON STORAGE REGULATOR"/>
    <property type="match status" value="1"/>
</dbReference>
<dbReference type="Pfam" id="PF02599">
    <property type="entry name" value="CsrA"/>
    <property type="match status" value="1"/>
</dbReference>
<dbReference type="SUPFAM" id="SSF117130">
    <property type="entry name" value="CsrA-like"/>
    <property type="match status" value="1"/>
</dbReference>
<protein>
    <recommendedName>
        <fullName evidence="1">Translational regulator CsrA</fullName>
    </recommendedName>
</protein>
<evidence type="ECO:0000255" key="1">
    <source>
        <dbReference type="HAMAP-Rule" id="MF_00167"/>
    </source>
</evidence>
<organism>
    <name type="scientific">Clostridium botulinum (strain Langeland / NCTC 10281 / Type F)</name>
    <dbReference type="NCBI Taxonomy" id="441772"/>
    <lineage>
        <taxon>Bacteria</taxon>
        <taxon>Bacillati</taxon>
        <taxon>Bacillota</taxon>
        <taxon>Clostridia</taxon>
        <taxon>Eubacteriales</taxon>
        <taxon>Clostridiaceae</taxon>
        <taxon>Clostridium</taxon>
    </lineage>
</organism>
<feature type="chain" id="PRO_1000023371" description="Translational regulator CsrA">
    <location>
        <begin position="1"/>
        <end position="72"/>
    </location>
</feature>